<proteinExistence type="inferred from homology"/>
<reference key="1">
    <citation type="journal article" date="1990" name="Virology">
        <title>The complete DNA sequence of vaccinia virus.</title>
        <authorList>
            <person name="Goebel S.J."/>
            <person name="Johnson G.P."/>
            <person name="Perkus M.E."/>
            <person name="Davis S.W."/>
            <person name="Winslow J.P."/>
            <person name="Paoletti E."/>
        </authorList>
    </citation>
    <scope>NUCLEOTIDE SEQUENCE [LARGE SCALE GENOMIC DNA]</scope>
</reference>
<reference key="2">
    <citation type="journal article" date="1990" name="Virology">
        <title>Appendix to 'The complete DNA sequence of vaccinia virus'.</title>
        <authorList>
            <person name="Goebel S.J."/>
            <person name="Johnson G.P."/>
            <person name="Perkus M.E."/>
            <person name="Davis S.W."/>
            <person name="Winslow J.P."/>
            <person name="Paoletti E."/>
        </authorList>
    </citation>
    <scope>NUCLEOTIDE SEQUENCE [LARGE SCALE GENOMIC DNA]</scope>
</reference>
<evidence type="ECO:0000250" key="1">
    <source>
        <dbReference type="UniProtKB" id="P07614"/>
    </source>
</evidence>
<evidence type="ECO:0000256" key="2">
    <source>
        <dbReference type="SAM" id="MobiDB-lite"/>
    </source>
</evidence>
<evidence type="ECO:0000305" key="3"/>
<name>PG097_VACCC</name>
<organismHost>
    <name type="scientific">Homo sapiens</name>
    <name type="common">Human</name>
    <dbReference type="NCBI Taxonomy" id="9606"/>
</organismHost>
<sequence>MNTRTDVTNDNIDKNPTKRGDRNIPGRNERFNDQNRFNNDRPRPKPRLQPNQPPKQDNKCREENGDFINIRLCAYEKEYCNDGYLSPAYYMLKQVDDEEMSCWSELSSLVRSRKAVGFPLLKAAKRISHGSMLYFEQLKNSKVVKLTPQVKCLNDTVIFQTVVILYSMYKRGIYSNEFCFDLVSIPRTNIVFSVNQLMFNICTDILVVLSICGNRLYRTNLPQSCYLNFIHGHETIARRGYEHSNYFFEWLIKNHISLLTKQTMDILKVKKKYATGAPVNRLLEPGTLVYVPKEDYYFIGISLTDVSISDNVRVLFSTDGIVLEIEDFNIKHLFMAGEMFVRSQSSTIIV</sequence>
<keyword id="KW-1035">Host cytoplasm</keyword>
<keyword id="KW-0426">Late protein</keyword>
<keyword id="KW-1185">Reference proteome</keyword>
<keyword id="KW-0946">Virion</keyword>
<accession>P21031</accession>
<protein>
    <recommendedName>
        <fullName>Protein OPG097</fullName>
    </recommendedName>
    <alternativeName>
        <fullName>Protein L3</fullName>
    </alternativeName>
</protein>
<comment type="function">
    <text evidence="1">Might be required to be present in the virion for transcription of early genes after primo infection.</text>
</comment>
<comment type="subcellular location">
    <subcellularLocation>
        <location evidence="1">Virion</location>
    </subcellularLocation>
    <subcellularLocation>
        <location evidence="1">Host cytoplasm</location>
    </subcellularLocation>
    <text evidence="1">Localizes in cytoplasmic virus factories and present in the virion core.</text>
</comment>
<comment type="induction">
    <text evidence="1">Expressed in the late phase of the viral replicative cycle.</text>
</comment>
<comment type="similarity">
    <text evidence="3">Belongs to the orthopoxvirus OPG097 family.</text>
</comment>
<organism>
    <name type="scientific">Vaccinia virus (strain Copenhagen)</name>
    <name type="common">VACV</name>
    <dbReference type="NCBI Taxonomy" id="10249"/>
    <lineage>
        <taxon>Viruses</taxon>
        <taxon>Varidnaviria</taxon>
        <taxon>Bamfordvirae</taxon>
        <taxon>Nucleocytoviricota</taxon>
        <taxon>Pokkesviricetes</taxon>
        <taxon>Chitovirales</taxon>
        <taxon>Poxviridae</taxon>
        <taxon>Chordopoxvirinae</taxon>
        <taxon>Orthopoxvirus</taxon>
        <taxon>Vaccinia virus</taxon>
    </lineage>
</organism>
<gene>
    <name type="primary">OPG097</name>
    <name type="ORF">L3L</name>
</gene>
<dbReference type="EMBL" id="M35027">
    <property type="protein sequence ID" value="AAA48078.1"/>
    <property type="molecule type" value="Genomic_DNA"/>
</dbReference>
<dbReference type="PIR" id="A42513">
    <property type="entry name" value="A42513"/>
</dbReference>
<dbReference type="Proteomes" id="UP000008269">
    <property type="component" value="Segment"/>
</dbReference>
<dbReference type="GO" id="GO:0030430">
    <property type="term" value="C:host cell cytoplasm"/>
    <property type="evidence" value="ECO:0007669"/>
    <property type="project" value="UniProtKB-SubCell"/>
</dbReference>
<dbReference type="GO" id="GO:0044423">
    <property type="term" value="C:virion component"/>
    <property type="evidence" value="ECO:0007669"/>
    <property type="project" value="UniProtKB-KW"/>
</dbReference>
<dbReference type="InterPro" id="IPR005007">
    <property type="entry name" value="Poxvirus_L3/FP4"/>
</dbReference>
<dbReference type="Pfam" id="PF03339">
    <property type="entry name" value="Pox_L3_FP4"/>
    <property type="match status" value="1"/>
</dbReference>
<feature type="chain" id="PRO_0000099621" description="Protein OPG097">
    <location>
        <begin position="1"/>
        <end position="350"/>
    </location>
</feature>
<feature type="region of interest" description="Disordered" evidence="2">
    <location>
        <begin position="1"/>
        <end position="61"/>
    </location>
</feature>
<feature type="compositionally biased region" description="Polar residues" evidence="2">
    <location>
        <begin position="1"/>
        <end position="10"/>
    </location>
</feature>
<feature type="compositionally biased region" description="Basic and acidic residues" evidence="2">
    <location>
        <begin position="11"/>
        <end position="43"/>
    </location>
</feature>